<accession>Q7KUT2</accession>
<accession>Q9VW20</accession>
<protein>
    <recommendedName>
        <fullName evidence="1">Lon protease homolog, mitochondrial</fullName>
        <ecNumber evidence="1">3.4.21.53</ecNumber>
    </recommendedName>
</protein>
<organism>
    <name type="scientific">Drosophila melanogaster</name>
    <name type="common">Fruit fly</name>
    <dbReference type="NCBI Taxonomy" id="7227"/>
    <lineage>
        <taxon>Eukaryota</taxon>
        <taxon>Metazoa</taxon>
        <taxon>Ecdysozoa</taxon>
        <taxon>Arthropoda</taxon>
        <taxon>Hexapoda</taxon>
        <taxon>Insecta</taxon>
        <taxon>Pterygota</taxon>
        <taxon>Neoptera</taxon>
        <taxon>Endopterygota</taxon>
        <taxon>Diptera</taxon>
        <taxon>Brachycera</taxon>
        <taxon>Muscomorpha</taxon>
        <taxon>Ephydroidea</taxon>
        <taxon>Drosophilidae</taxon>
        <taxon>Drosophila</taxon>
        <taxon>Sophophora</taxon>
    </lineage>
</organism>
<evidence type="ECO:0000255" key="1">
    <source>
        <dbReference type="HAMAP-Rule" id="MF_03120"/>
    </source>
</evidence>
<evidence type="ECO:0000255" key="2">
    <source>
        <dbReference type="PROSITE-ProRule" id="PRU01122"/>
    </source>
</evidence>
<evidence type="ECO:0000255" key="3">
    <source>
        <dbReference type="PROSITE-ProRule" id="PRU01123"/>
    </source>
</evidence>
<evidence type="ECO:0000256" key="4">
    <source>
        <dbReference type="SAM" id="MobiDB-lite"/>
    </source>
</evidence>
<evidence type="ECO:0000269" key="5">
    <source>
    </source>
</evidence>
<evidence type="ECO:0000305" key="6"/>
<keyword id="KW-0025">Alternative splicing</keyword>
<keyword id="KW-0067">ATP-binding</keyword>
<keyword id="KW-0238">DNA-binding</keyword>
<keyword id="KW-0378">Hydrolase</keyword>
<keyword id="KW-0496">Mitochondrion</keyword>
<keyword id="KW-0547">Nucleotide-binding</keyword>
<keyword id="KW-0645">Protease</keyword>
<keyword id="KW-1185">Reference proteome</keyword>
<keyword id="KW-0720">Serine protease</keyword>
<keyword id="KW-0809">Transit peptide</keyword>
<dbReference type="EC" id="3.4.21.53" evidence="1"/>
<dbReference type="EMBL" id="AE014296">
    <property type="protein sequence ID" value="AAF49134.1"/>
    <property type="molecule type" value="Genomic_DNA"/>
</dbReference>
<dbReference type="EMBL" id="AE014296">
    <property type="protein sequence ID" value="AAN11654.2"/>
    <property type="molecule type" value="Genomic_DNA"/>
</dbReference>
<dbReference type="EMBL" id="BT099738">
    <property type="protein sequence ID" value="ACV53872.1"/>
    <property type="molecule type" value="mRNA"/>
</dbReference>
<dbReference type="RefSeq" id="NP_649133.1">
    <molecule id="Q7KUT2-2"/>
    <property type="nucleotide sequence ID" value="NM_140876.3"/>
</dbReference>
<dbReference type="RefSeq" id="NP_730435.2">
    <molecule id="Q7KUT2-1"/>
    <property type="nucleotide sequence ID" value="NM_168806.3"/>
</dbReference>
<dbReference type="SMR" id="Q7KUT2"/>
<dbReference type="BioGRID" id="65408">
    <property type="interactions" value="8"/>
</dbReference>
<dbReference type="FunCoup" id="Q7KUT2">
    <property type="interactions" value="1248"/>
</dbReference>
<dbReference type="IntAct" id="Q7KUT2">
    <property type="interactions" value="13"/>
</dbReference>
<dbReference type="STRING" id="7227.FBpp0271918"/>
<dbReference type="MEROPS" id="S16.002"/>
<dbReference type="PaxDb" id="7227-FBpp0271918"/>
<dbReference type="DNASU" id="40138"/>
<dbReference type="EnsemblMetazoa" id="FBtr0074967">
    <molecule id="Q7KUT2-2"/>
    <property type="protein sequence ID" value="FBpp0074735"/>
    <property type="gene ID" value="FBgn0036892"/>
</dbReference>
<dbReference type="EnsemblMetazoa" id="FBtr0273410">
    <molecule id="Q7KUT2-1"/>
    <property type="protein sequence ID" value="FBpp0271918"/>
    <property type="gene ID" value="FBgn0036892"/>
</dbReference>
<dbReference type="GeneID" id="40138"/>
<dbReference type="KEGG" id="dme:Dmel_CG8798"/>
<dbReference type="UCSC" id="CG8798-RA">
    <property type="organism name" value="d. melanogaster"/>
</dbReference>
<dbReference type="AGR" id="FB:FBgn0036892"/>
<dbReference type="CTD" id="40138"/>
<dbReference type="FlyBase" id="FBgn0036892">
    <property type="gene designation" value="Lon"/>
</dbReference>
<dbReference type="VEuPathDB" id="VectorBase:FBgn0036892"/>
<dbReference type="eggNOG" id="KOG2004">
    <property type="taxonomic scope" value="Eukaryota"/>
</dbReference>
<dbReference type="GeneTree" id="ENSGT00530000063553"/>
<dbReference type="InParanoid" id="Q7KUT2"/>
<dbReference type="OMA" id="WLTNIPW"/>
<dbReference type="OrthoDB" id="2411602at2759"/>
<dbReference type="PhylomeDB" id="Q7KUT2"/>
<dbReference type="Reactome" id="R-DME-9837999">
    <property type="pathway name" value="Mitochondrial protein degradation"/>
</dbReference>
<dbReference type="SignaLink" id="Q7KUT2"/>
<dbReference type="BioGRID-ORCS" id="40138">
    <property type="hits" value="0 hits in 1 CRISPR screen"/>
</dbReference>
<dbReference type="ChiTaRS" id="Lon">
    <property type="organism name" value="fly"/>
</dbReference>
<dbReference type="GenomeRNAi" id="40138"/>
<dbReference type="PRO" id="PR:Q7KUT2"/>
<dbReference type="Proteomes" id="UP000000803">
    <property type="component" value="Chromosome 3L"/>
</dbReference>
<dbReference type="Bgee" id="FBgn0036892">
    <property type="expression patterns" value="Expressed in hemocyte (sensu Nematoda and Protostomia) in imaginal disc-derived wing and 152 other cell types or tissues"/>
</dbReference>
<dbReference type="ExpressionAtlas" id="Q7KUT2">
    <property type="expression patterns" value="baseline and differential"/>
</dbReference>
<dbReference type="GO" id="GO:0005759">
    <property type="term" value="C:mitochondrial matrix"/>
    <property type="evidence" value="ECO:0000318"/>
    <property type="project" value="GO_Central"/>
</dbReference>
<dbReference type="GO" id="GO:0005739">
    <property type="term" value="C:mitochondrion"/>
    <property type="evidence" value="ECO:0000314"/>
    <property type="project" value="FlyBase"/>
</dbReference>
<dbReference type="GO" id="GO:0005777">
    <property type="term" value="C:peroxisome"/>
    <property type="evidence" value="ECO:0000250"/>
    <property type="project" value="FlyBase"/>
</dbReference>
<dbReference type="GO" id="GO:0005524">
    <property type="term" value="F:ATP binding"/>
    <property type="evidence" value="ECO:0007669"/>
    <property type="project" value="UniProtKB-UniRule"/>
</dbReference>
<dbReference type="GO" id="GO:0016887">
    <property type="term" value="F:ATP hydrolysis activity"/>
    <property type="evidence" value="ECO:0007669"/>
    <property type="project" value="UniProtKB-UniRule"/>
</dbReference>
<dbReference type="GO" id="GO:0004176">
    <property type="term" value="F:ATP-dependent peptidase activity"/>
    <property type="evidence" value="ECO:0000318"/>
    <property type="project" value="GO_Central"/>
</dbReference>
<dbReference type="GO" id="GO:0043565">
    <property type="term" value="F:sequence-specific DNA binding"/>
    <property type="evidence" value="ECO:0007669"/>
    <property type="project" value="UniProtKB-UniRule"/>
</dbReference>
<dbReference type="GO" id="GO:0017171">
    <property type="term" value="F:serine hydrolase activity"/>
    <property type="evidence" value="ECO:0007005"/>
    <property type="project" value="FlyBase"/>
</dbReference>
<dbReference type="GO" id="GO:0004252">
    <property type="term" value="F:serine-type endopeptidase activity"/>
    <property type="evidence" value="ECO:0007669"/>
    <property type="project" value="UniProtKB-UniRule"/>
</dbReference>
<dbReference type="GO" id="GO:0003697">
    <property type="term" value="F:single-stranded DNA binding"/>
    <property type="evidence" value="ECO:0000318"/>
    <property type="project" value="GO_Central"/>
</dbReference>
<dbReference type="GO" id="GO:0034599">
    <property type="term" value="P:cellular response to oxidative stress"/>
    <property type="evidence" value="ECO:0007669"/>
    <property type="project" value="UniProtKB-UniRule"/>
</dbReference>
<dbReference type="GO" id="GO:0051131">
    <property type="term" value="P:chaperone-mediated protein complex assembly"/>
    <property type="evidence" value="ECO:0000318"/>
    <property type="project" value="GO_Central"/>
</dbReference>
<dbReference type="GO" id="GO:0141164">
    <property type="term" value="P:mitochondrial protein quality control"/>
    <property type="evidence" value="ECO:0000315"/>
    <property type="project" value="FlyBase"/>
</dbReference>
<dbReference type="GO" id="GO:0007005">
    <property type="term" value="P:mitochondrion organization"/>
    <property type="evidence" value="ECO:0000315"/>
    <property type="project" value="FlyBase"/>
</dbReference>
<dbReference type="GO" id="GO:0070407">
    <property type="term" value="P:oxidation-dependent protein catabolic process"/>
    <property type="evidence" value="ECO:0007669"/>
    <property type="project" value="UniProtKB-UniRule"/>
</dbReference>
<dbReference type="GO" id="GO:0045732">
    <property type="term" value="P:positive regulation of protein catabolic process"/>
    <property type="evidence" value="ECO:0000315"/>
    <property type="project" value="FlyBase"/>
</dbReference>
<dbReference type="GO" id="GO:0006515">
    <property type="term" value="P:protein quality control for misfolded or incompletely synthesized proteins"/>
    <property type="evidence" value="ECO:0000318"/>
    <property type="project" value="GO_Central"/>
</dbReference>
<dbReference type="CDD" id="cd19500">
    <property type="entry name" value="RecA-like_Lon"/>
    <property type="match status" value="1"/>
</dbReference>
<dbReference type="FunFam" id="3.40.50.300:FF:000021">
    <property type="entry name" value="Lon protease homolog"/>
    <property type="match status" value="1"/>
</dbReference>
<dbReference type="FunFam" id="1.10.8.60:FF:000043">
    <property type="entry name" value="Lon protease homolog, mitochondrial"/>
    <property type="match status" value="1"/>
</dbReference>
<dbReference type="FunFam" id="1.20.5.5270:FF:000001">
    <property type="entry name" value="Lon protease homolog, mitochondrial"/>
    <property type="match status" value="1"/>
</dbReference>
<dbReference type="FunFam" id="1.20.58.1480:FF:000002">
    <property type="entry name" value="Lon protease homolog, mitochondrial"/>
    <property type="match status" value="1"/>
</dbReference>
<dbReference type="FunFam" id="2.30.130.40:FF:000012">
    <property type="entry name" value="Lon protease homolog, mitochondrial"/>
    <property type="match status" value="1"/>
</dbReference>
<dbReference type="FunFam" id="3.30.230.10:FF:000015">
    <property type="entry name" value="Lon protease homolog, mitochondrial"/>
    <property type="match status" value="1"/>
</dbReference>
<dbReference type="Gene3D" id="1.10.8.60">
    <property type="match status" value="1"/>
</dbReference>
<dbReference type="Gene3D" id="1.20.5.5270">
    <property type="match status" value="1"/>
</dbReference>
<dbReference type="Gene3D" id="1.20.58.1480">
    <property type="match status" value="1"/>
</dbReference>
<dbReference type="Gene3D" id="3.30.230.10">
    <property type="match status" value="1"/>
</dbReference>
<dbReference type="Gene3D" id="2.30.130.40">
    <property type="entry name" value="LON domain-like"/>
    <property type="match status" value="1"/>
</dbReference>
<dbReference type="Gene3D" id="3.40.50.300">
    <property type="entry name" value="P-loop containing nucleotide triphosphate hydrolases"/>
    <property type="match status" value="1"/>
</dbReference>
<dbReference type="HAMAP" id="MF_03120">
    <property type="entry name" value="lonm_euk"/>
    <property type="match status" value="1"/>
</dbReference>
<dbReference type="InterPro" id="IPR003593">
    <property type="entry name" value="AAA+_ATPase"/>
</dbReference>
<dbReference type="InterPro" id="IPR003959">
    <property type="entry name" value="ATPase_AAA_core"/>
</dbReference>
<dbReference type="InterPro" id="IPR004815">
    <property type="entry name" value="Lon_bac/euk-typ"/>
</dbReference>
<dbReference type="InterPro" id="IPR054594">
    <property type="entry name" value="Lon_lid"/>
</dbReference>
<dbReference type="InterPro" id="IPR008269">
    <property type="entry name" value="Lon_proteolytic"/>
</dbReference>
<dbReference type="InterPro" id="IPR027065">
    <property type="entry name" value="Lon_Prtase"/>
</dbReference>
<dbReference type="InterPro" id="IPR003111">
    <property type="entry name" value="Lon_prtase_N"/>
</dbReference>
<dbReference type="InterPro" id="IPR046336">
    <property type="entry name" value="Lon_prtase_N_sf"/>
</dbReference>
<dbReference type="InterPro" id="IPR027503">
    <property type="entry name" value="Lonm_euk"/>
</dbReference>
<dbReference type="InterPro" id="IPR027417">
    <property type="entry name" value="P-loop_NTPase"/>
</dbReference>
<dbReference type="InterPro" id="IPR008268">
    <property type="entry name" value="Peptidase_S16_AS"/>
</dbReference>
<dbReference type="InterPro" id="IPR015947">
    <property type="entry name" value="PUA-like_sf"/>
</dbReference>
<dbReference type="InterPro" id="IPR020568">
    <property type="entry name" value="Ribosomal_Su5_D2-typ_SF"/>
</dbReference>
<dbReference type="InterPro" id="IPR014721">
    <property type="entry name" value="Ribsml_uS5_D2-typ_fold_subgr"/>
</dbReference>
<dbReference type="NCBIfam" id="TIGR00763">
    <property type="entry name" value="lon"/>
    <property type="match status" value="1"/>
</dbReference>
<dbReference type="PANTHER" id="PTHR43718">
    <property type="entry name" value="LON PROTEASE"/>
    <property type="match status" value="1"/>
</dbReference>
<dbReference type="PANTHER" id="PTHR43718:SF2">
    <property type="entry name" value="LON PROTEASE HOMOLOG, MITOCHONDRIAL"/>
    <property type="match status" value="1"/>
</dbReference>
<dbReference type="Pfam" id="PF00004">
    <property type="entry name" value="AAA"/>
    <property type="match status" value="1"/>
</dbReference>
<dbReference type="Pfam" id="PF05362">
    <property type="entry name" value="Lon_C"/>
    <property type="match status" value="1"/>
</dbReference>
<dbReference type="Pfam" id="PF22667">
    <property type="entry name" value="Lon_lid"/>
    <property type="match status" value="1"/>
</dbReference>
<dbReference type="Pfam" id="PF02190">
    <property type="entry name" value="LON_substr_bdg"/>
    <property type="match status" value="1"/>
</dbReference>
<dbReference type="PRINTS" id="PR00830">
    <property type="entry name" value="ENDOLAPTASE"/>
</dbReference>
<dbReference type="SMART" id="SM00382">
    <property type="entry name" value="AAA"/>
    <property type="match status" value="1"/>
</dbReference>
<dbReference type="SMART" id="SM00464">
    <property type="entry name" value="LON"/>
    <property type="match status" value="1"/>
</dbReference>
<dbReference type="SUPFAM" id="SSF52540">
    <property type="entry name" value="P-loop containing nucleoside triphosphate hydrolases"/>
    <property type="match status" value="1"/>
</dbReference>
<dbReference type="SUPFAM" id="SSF88697">
    <property type="entry name" value="PUA domain-like"/>
    <property type="match status" value="2"/>
</dbReference>
<dbReference type="SUPFAM" id="SSF54211">
    <property type="entry name" value="Ribosomal protein S5 domain 2-like"/>
    <property type="match status" value="1"/>
</dbReference>
<dbReference type="PROSITE" id="PS51787">
    <property type="entry name" value="LON_N"/>
    <property type="match status" value="1"/>
</dbReference>
<dbReference type="PROSITE" id="PS51786">
    <property type="entry name" value="LON_PROTEOLYTIC"/>
    <property type="match status" value="1"/>
</dbReference>
<dbReference type="PROSITE" id="PS01046">
    <property type="entry name" value="LON_SER"/>
    <property type="match status" value="1"/>
</dbReference>
<feature type="transit peptide" description="Mitochondrion" evidence="1">
    <location>
        <begin position="1"/>
        <end position="56"/>
    </location>
</feature>
<feature type="chain" id="PRO_0000395762" description="Lon protease homolog, mitochondrial">
    <location>
        <begin position="57"/>
        <end position="1024"/>
    </location>
</feature>
<feature type="domain" description="Lon N-terminal" evidence="3">
    <location>
        <begin position="94"/>
        <end position="411"/>
    </location>
</feature>
<feature type="domain" description="Lon proteolytic" evidence="2">
    <location>
        <begin position="800"/>
        <end position="992"/>
    </location>
</feature>
<feature type="region of interest" description="Disordered" evidence="4">
    <location>
        <begin position="219"/>
        <end position="305"/>
    </location>
</feature>
<feature type="region of interest" description="Disordered" evidence="4">
    <location>
        <begin position="999"/>
        <end position="1024"/>
    </location>
</feature>
<feature type="compositionally biased region" description="Basic residues" evidence="4">
    <location>
        <begin position="239"/>
        <end position="250"/>
    </location>
</feature>
<feature type="compositionally biased region" description="Basic and acidic residues" evidence="4">
    <location>
        <begin position="285"/>
        <end position="297"/>
    </location>
</feature>
<feature type="active site" evidence="1">
    <location>
        <position position="898"/>
    </location>
</feature>
<feature type="active site" evidence="1">
    <location>
        <position position="941"/>
    </location>
</feature>
<feature type="binding site" evidence="1">
    <location>
        <begin position="564"/>
        <end position="571"/>
    </location>
    <ligand>
        <name>ATP</name>
        <dbReference type="ChEBI" id="CHEBI:30616"/>
    </ligand>
</feature>
<feature type="splice variant" id="VSP_039539" description="In isoform A." evidence="6">
    <location>
        <begin position="199"/>
        <end position="216"/>
    </location>
</feature>
<feature type="mutagenesis site" description="Severe retardation of TFAM degradation following mtDNA depletion." evidence="5">
    <original>S</original>
    <variation>A</variation>
    <location>
        <position position="898"/>
    </location>
</feature>
<comment type="function">
    <text evidence="1 5">ATP-dependent serine protease that mediates the selective degradation of misfolded, unassembled or oxidatively damaged polypeptides as well as certain short-lived regulatory proteins in the mitochondrial matrix. May also have a chaperone function in the assembly of inner membrane protein complexes. Participates in the regulation of mitochondrial gene expression and in the maintenance of the integrity of the mitochondrial genome. Binds to mitochondrial DNA in a site-specific manner. Regulates mitochondrial DNA (mtDNA) copy number and transcription by stabilizing the mitochondrial TFAM:mtDNA ratio via selective degradation of TFAM.</text>
</comment>
<comment type="catalytic activity">
    <reaction evidence="1">
        <text>Hydrolysis of proteins in presence of ATP.</text>
        <dbReference type="EC" id="3.4.21.53"/>
    </reaction>
</comment>
<comment type="subunit">
    <text evidence="1">Homohexamer or homoheptamer. Organized in a ring with a central cavity.</text>
</comment>
<comment type="subcellular location">
    <subcellularLocation>
        <location evidence="1 5">Mitochondrion matrix</location>
    </subcellularLocation>
</comment>
<comment type="alternative products">
    <event type="alternative splicing"/>
    <isoform>
        <id>Q7KUT2-1</id>
        <name>C</name>
        <sequence type="displayed"/>
    </isoform>
    <isoform>
        <id>Q7KUT2-2</id>
        <name>A</name>
        <sequence type="described" ref="VSP_039539"/>
    </isoform>
</comment>
<comment type="similarity">
    <text evidence="1">Belongs to the peptidase S16 family.</text>
</comment>
<reference key="1">
    <citation type="journal article" date="2000" name="Science">
        <title>The genome sequence of Drosophila melanogaster.</title>
        <authorList>
            <person name="Adams M.D."/>
            <person name="Celniker S.E."/>
            <person name="Holt R.A."/>
            <person name="Evans C.A."/>
            <person name="Gocayne J.D."/>
            <person name="Amanatides P.G."/>
            <person name="Scherer S.E."/>
            <person name="Li P.W."/>
            <person name="Hoskins R.A."/>
            <person name="Galle R.F."/>
            <person name="George R.A."/>
            <person name="Lewis S.E."/>
            <person name="Richards S."/>
            <person name="Ashburner M."/>
            <person name="Henderson S.N."/>
            <person name="Sutton G.G."/>
            <person name="Wortman J.R."/>
            <person name="Yandell M.D."/>
            <person name="Zhang Q."/>
            <person name="Chen L.X."/>
            <person name="Brandon R.C."/>
            <person name="Rogers Y.-H.C."/>
            <person name="Blazej R.G."/>
            <person name="Champe M."/>
            <person name="Pfeiffer B.D."/>
            <person name="Wan K.H."/>
            <person name="Doyle C."/>
            <person name="Baxter E.G."/>
            <person name="Helt G."/>
            <person name="Nelson C.R."/>
            <person name="Miklos G.L.G."/>
            <person name="Abril J.F."/>
            <person name="Agbayani A."/>
            <person name="An H.-J."/>
            <person name="Andrews-Pfannkoch C."/>
            <person name="Baldwin D."/>
            <person name="Ballew R.M."/>
            <person name="Basu A."/>
            <person name="Baxendale J."/>
            <person name="Bayraktaroglu L."/>
            <person name="Beasley E.M."/>
            <person name="Beeson K.Y."/>
            <person name="Benos P.V."/>
            <person name="Berman B.P."/>
            <person name="Bhandari D."/>
            <person name="Bolshakov S."/>
            <person name="Borkova D."/>
            <person name="Botchan M.R."/>
            <person name="Bouck J."/>
            <person name="Brokstein P."/>
            <person name="Brottier P."/>
            <person name="Burtis K.C."/>
            <person name="Busam D.A."/>
            <person name="Butler H."/>
            <person name="Cadieu E."/>
            <person name="Center A."/>
            <person name="Chandra I."/>
            <person name="Cherry J.M."/>
            <person name="Cawley S."/>
            <person name="Dahlke C."/>
            <person name="Davenport L.B."/>
            <person name="Davies P."/>
            <person name="de Pablos B."/>
            <person name="Delcher A."/>
            <person name="Deng Z."/>
            <person name="Mays A.D."/>
            <person name="Dew I."/>
            <person name="Dietz S.M."/>
            <person name="Dodson K."/>
            <person name="Doup L.E."/>
            <person name="Downes M."/>
            <person name="Dugan-Rocha S."/>
            <person name="Dunkov B.C."/>
            <person name="Dunn P."/>
            <person name="Durbin K.J."/>
            <person name="Evangelista C.C."/>
            <person name="Ferraz C."/>
            <person name="Ferriera S."/>
            <person name="Fleischmann W."/>
            <person name="Fosler C."/>
            <person name="Gabrielian A.E."/>
            <person name="Garg N.S."/>
            <person name="Gelbart W.M."/>
            <person name="Glasser K."/>
            <person name="Glodek A."/>
            <person name="Gong F."/>
            <person name="Gorrell J.H."/>
            <person name="Gu Z."/>
            <person name="Guan P."/>
            <person name="Harris M."/>
            <person name="Harris N.L."/>
            <person name="Harvey D.A."/>
            <person name="Heiman T.J."/>
            <person name="Hernandez J.R."/>
            <person name="Houck J."/>
            <person name="Hostin D."/>
            <person name="Houston K.A."/>
            <person name="Howland T.J."/>
            <person name="Wei M.-H."/>
            <person name="Ibegwam C."/>
            <person name="Jalali M."/>
            <person name="Kalush F."/>
            <person name="Karpen G.H."/>
            <person name="Ke Z."/>
            <person name="Kennison J.A."/>
            <person name="Ketchum K.A."/>
            <person name="Kimmel B.E."/>
            <person name="Kodira C.D."/>
            <person name="Kraft C.L."/>
            <person name="Kravitz S."/>
            <person name="Kulp D."/>
            <person name="Lai Z."/>
            <person name="Lasko P."/>
            <person name="Lei Y."/>
            <person name="Levitsky A.A."/>
            <person name="Li J.H."/>
            <person name="Li Z."/>
            <person name="Liang Y."/>
            <person name="Lin X."/>
            <person name="Liu X."/>
            <person name="Mattei B."/>
            <person name="McIntosh T.C."/>
            <person name="McLeod M.P."/>
            <person name="McPherson D."/>
            <person name="Merkulov G."/>
            <person name="Milshina N.V."/>
            <person name="Mobarry C."/>
            <person name="Morris J."/>
            <person name="Moshrefi A."/>
            <person name="Mount S.M."/>
            <person name="Moy M."/>
            <person name="Murphy B."/>
            <person name="Murphy L."/>
            <person name="Muzny D.M."/>
            <person name="Nelson D.L."/>
            <person name="Nelson D.R."/>
            <person name="Nelson K.A."/>
            <person name="Nixon K."/>
            <person name="Nusskern D.R."/>
            <person name="Pacleb J.M."/>
            <person name="Palazzolo M."/>
            <person name="Pittman G.S."/>
            <person name="Pan S."/>
            <person name="Pollard J."/>
            <person name="Puri V."/>
            <person name="Reese M.G."/>
            <person name="Reinert K."/>
            <person name="Remington K."/>
            <person name="Saunders R.D.C."/>
            <person name="Scheeler F."/>
            <person name="Shen H."/>
            <person name="Shue B.C."/>
            <person name="Siden-Kiamos I."/>
            <person name="Simpson M."/>
            <person name="Skupski M.P."/>
            <person name="Smith T.J."/>
            <person name="Spier E."/>
            <person name="Spradling A.C."/>
            <person name="Stapleton M."/>
            <person name="Strong R."/>
            <person name="Sun E."/>
            <person name="Svirskas R."/>
            <person name="Tector C."/>
            <person name="Turner R."/>
            <person name="Venter E."/>
            <person name="Wang A.H."/>
            <person name="Wang X."/>
            <person name="Wang Z.-Y."/>
            <person name="Wassarman D.A."/>
            <person name="Weinstock G.M."/>
            <person name="Weissenbach J."/>
            <person name="Williams S.M."/>
            <person name="Woodage T."/>
            <person name="Worley K.C."/>
            <person name="Wu D."/>
            <person name="Yang S."/>
            <person name="Yao Q.A."/>
            <person name="Ye J."/>
            <person name="Yeh R.-F."/>
            <person name="Zaveri J.S."/>
            <person name="Zhan M."/>
            <person name="Zhang G."/>
            <person name="Zhao Q."/>
            <person name="Zheng L."/>
            <person name="Zheng X.H."/>
            <person name="Zhong F.N."/>
            <person name="Zhong W."/>
            <person name="Zhou X."/>
            <person name="Zhu S.C."/>
            <person name="Zhu X."/>
            <person name="Smith H.O."/>
            <person name="Gibbs R.A."/>
            <person name="Myers E.W."/>
            <person name="Rubin G.M."/>
            <person name="Venter J.C."/>
        </authorList>
    </citation>
    <scope>NUCLEOTIDE SEQUENCE [LARGE SCALE GENOMIC DNA]</scope>
    <source>
        <strain>Berkeley</strain>
    </source>
</reference>
<reference key="2">
    <citation type="journal article" date="2002" name="Genome Biol.">
        <title>Annotation of the Drosophila melanogaster euchromatic genome: a systematic review.</title>
        <authorList>
            <person name="Misra S."/>
            <person name="Crosby M.A."/>
            <person name="Mungall C.J."/>
            <person name="Matthews B.B."/>
            <person name="Campbell K.S."/>
            <person name="Hradecky P."/>
            <person name="Huang Y."/>
            <person name="Kaminker J.S."/>
            <person name="Millburn G.H."/>
            <person name="Prochnik S.E."/>
            <person name="Smith C.D."/>
            <person name="Tupy J.L."/>
            <person name="Whitfield E.J."/>
            <person name="Bayraktaroglu L."/>
            <person name="Berman B.P."/>
            <person name="Bettencourt B.R."/>
            <person name="Celniker S.E."/>
            <person name="de Grey A.D.N.J."/>
            <person name="Drysdale R.A."/>
            <person name="Harris N.L."/>
            <person name="Richter J."/>
            <person name="Russo S."/>
            <person name="Schroeder A.J."/>
            <person name="Shu S.Q."/>
            <person name="Stapleton M."/>
            <person name="Yamada C."/>
            <person name="Ashburner M."/>
            <person name="Gelbart W.M."/>
            <person name="Rubin G.M."/>
            <person name="Lewis S.E."/>
        </authorList>
    </citation>
    <scope>GENOME REANNOTATION</scope>
    <source>
        <strain>Berkeley</strain>
    </source>
</reference>
<reference key="3">
    <citation type="submission" date="2009-09" db="EMBL/GenBank/DDBJ databases">
        <authorList>
            <person name="Carlson J."/>
            <person name="Booth B."/>
            <person name="Frise E."/>
            <person name="Park S."/>
            <person name="Wan K."/>
            <person name="Yu C."/>
            <person name="Celniker S."/>
        </authorList>
    </citation>
    <scope>NUCLEOTIDE SEQUENCE [LARGE SCALE MRNA]</scope>
    <source>
        <strain>Berkeley</strain>
        <tissue>Embryo</tissue>
    </source>
</reference>
<reference key="4">
    <citation type="journal article" date="2010" name="Proc. Natl. Acad. Sci. U.S.A.">
        <title>Mitochondrial Lon protease regulates mitochondrial DNA copy number and transcription by selective degradation of mitochondrial transcription factor A (TFAM).</title>
        <authorList>
            <person name="Matsushima Y."/>
            <person name="Goto Y."/>
            <person name="Kaguni L.S."/>
        </authorList>
    </citation>
    <scope>FUNCTION</scope>
    <scope>SUBCELLULAR LOCATION</scope>
    <scope>MUTAGENESIS OF SER-898</scope>
</reference>
<sequence>MLARAIRVRPMMRGIASSSVWNRNRPIQSSLMQYCRDRSLRLQRLHGANLMVQRFYSRKRDDSNGDIIMGPDLMSDQDTHLPATVAVPDVWPHVPLLAMRKNPLFPRFMKIVEVSNPIIMDLLRRKVKLNQPYVGVFLKKTDGEEELITNLNDVYNLGTFAQIQELQDLGDKLRMVVVAHRRIRITGQVVEDVPPPKPVKMTTLHYPLFNIKLQIPAEDQSTDQADAAPIKSRSDPARKPRGRIPRSRTGKSRESAAAEELIQNQTLEPPLKSGKVESSSLPKPPTEEKIVEPETGAKENVNQSAPSAQPVLIVEVENVKQPIYKQTEEVKALTQEIIKTLRDIITMNPLYRESLQQMLHQNQRVVDNPIYLCDLGASLSAGEPAELQKILEETDIPERLQLALTLLKKELELSRLQQKIGREVEEKVKQQHRKYILQEQLKVIKKELGIEKDDKDAIGEKYREKLKDKVVPEAIMTVIDEELTKLNFLESHSSEFNVTRNYLDWLTSLPWGVISTENLCLEKATETLNDDHYGMEDIKKRILEFIAVSSLKGSTQGKILCFHGPPGVGKTSIAKSIARALNREYFRFSVGGMTDVAEIKGHRRTYVGAMPGKLIQCLKKTKIENPLVLIDEVDKIGKGYQGDPSSALLELLDPEQNANFLDHYLDVPVDLSRVLFICTANVIDTIPEPLRDRMELIEMSGYVAEEKIAIARQYLMPQAMKDCGLTDKHINISEDALNMLIRSYCRESGVRNLQKHIEKVIRKVAFRVVKKEGEHFPVNADNLTTFLGKQIFSSDRMYATTPVGVVMGLAWTAMGGSSLYIETSRRHIRQGAKTDPNTVAGSLHITGNLGDVMKESAQIALTVARNFLYSLEPNNLFLEQEHIHLHVPEGATPKDGPSAGITIITALVSLATGKPVRQDIAMTGEVSLKGKVLPVGGIKEKTIAARRSGVNCLILPVDNKKDFEELPTYITDGLEVHFATTYEDVYKIAFTDVTETTTNNVEEQEPLQKLSSAAAAKSETWPYS</sequence>
<name>LONM_DROME</name>
<gene>
    <name type="primary">Lon</name>
    <name type="ORF">CG8798</name>
</gene>
<proteinExistence type="evidence at protein level"/>